<sequence length="74" mass="7234">MEGDLAYIGAGLAGMGTGIAALGVGNVAANFLAGALRNPSAAASQTATLFIGIAFAEALGIFSFLVALLLMFAV</sequence>
<name>ATPL_RUEST</name>
<feature type="chain" id="PRO_1000184491" description="ATP synthase subunit c">
    <location>
        <begin position="1"/>
        <end position="74"/>
    </location>
</feature>
<feature type="transmembrane region" description="Helical" evidence="1">
    <location>
        <begin position="5"/>
        <end position="25"/>
    </location>
</feature>
<feature type="transmembrane region" description="Helical" evidence="1">
    <location>
        <begin position="49"/>
        <end position="69"/>
    </location>
</feature>
<feature type="site" description="Reversibly protonated during proton transport" evidence="1">
    <location>
        <position position="57"/>
    </location>
</feature>
<evidence type="ECO:0000255" key="1">
    <source>
        <dbReference type="HAMAP-Rule" id="MF_01396"/>
    </source>
</evidence>
<gene>
    <name evidence="1" type="primary">atpE</name>
    <name type="ordered locus">TM1040_2593</name>
</gene>
<organism>
    <name type="scientific">Ruegeria sp. (strain TM1040)</name>
    <name type="common">Silicibacter sp.</name>
    <dbReference type="NCBI Taxonomy" id="292414"/>
    <lineage>
        <taxon>Bacteria</taxon>
        <taxon>Pseudomonadati</taxon>
        <taxon>Pseudomonadota</taxon>
        <taxon>Alphaproteobacteria</taxon>
        <taxon>Rhodobacterales</taxon>
        <taxon>Roseobacteraceae</taxon>
        <taxon>Ruegeria</taxon>
    </lineage>
</organism>
<keyword id="KW-0066">ATP synthesis</keyword>
<keyword id="KW-0997">Cell inner membrane</keyword>
<keyword id="KW-1003">Cell membrane</keyword>
<keyword id="KW-0138">CF(0)</keyword>
<keyword id="KW-0375">Hydrogen ion transport</keyword>
<keyword id="KW-0406">Ion transport</keyword>
<keyword id="KW-0446">Lipid-binding</keyword>
<keyword id="KW-0472">Membrane</keyword>
<keyword id="KW-1185">Reference proteome</keyword>
<keyword id="KW-0812">Transmembrane</keyword>
<keyword id="KW-1133">Transmembrane helix</keyword>
<keyword id="KW-0813">Transport</keyword>
<comment type="function">
    <text evidence="1">F(1)F(0) ATP synthase produces ATP from ADP in the presence of a proton or sodium gradient. F-type ATPases consist of two structural domains, F(1) containing the extramembraneous catalytic core and F(0) containing the membrane proton channel, linked together by a central stalk and a peripheral stalk. During catalysis, ATP synthesis in the catalytic domain of F(1) is coupled via a rotary mechanism of the central stalk subunits to proton translocation.</text>
</comment>
<comment type="function">
    <text evidence="1">Key component of the F(0) channel; it plays a direct role in translocation across the membrane. A homomeric c-ring of between 10-14 subunits forms the central stalk rotor element with the F(1) delta and epsilon subunits.</text>
</comment>
<comment type="subunit">
    <text evidence="1">F-type ATPases have 2 components, F(1) - the catalytic core - and F(0) - the membrane proton channel. F(1) has five subunits: alpha(3), beta(3), gamma(1), delta(1), epsilon(1). F(0) has three main subunits: a(1), b(2) and c(10-14). The alpha and beta chains form an alternating ring which encloses part of the gamma chain. F(1) is attached to F(0) by a central stalk formed by the gamma and epsilon chains, while a peripheral stalk is formed by the delta and b chains.</text>
</comment>
<comment type="subcellular location">
    <subcellularLocation>
        <location evidence="1">Cell inner membrane</location>
        <topology evidence="1">Multi-pass membrane protein</topology>
    </subcellularLocation>
</comment>
<comment type="similarity">
    <text evidence="1">Belongs to the ATPase C chain family.</text>
</comment>
<dbReference type="EMBL" id="CP000377">
    <property type="protein sequence ID" value="ABF65325.1"/>
    <property type="molecule type" value="Genomic_DNA"/>
</dbReference>
<dbReference type="RefSeq" id="WP_005636439.1">
    <property type="nucleotide sequence ID" value="NC_008044.1"/>
</dbReference>
<dbReference type="SMR" id="Q1GDE1"/>
<dbReference type="STRING" id="292414.TM1040_2593"/>
<dbReference type="KEGG" id="sit:TM1040_2593"/>
<dbReference type="eggNOG" id="COG0636">
    <property type="taxonomic scope" value="Bacteria"/>
</dbReference>
<dbReference type="HOGENOM" id="CLU_148047_4_0_5"/>
<dbReference type="OrthoDB" id="9811093at2"/>
<dbReference type="Proteomes" id="UP000000636">
    <property type="component" value="Chromosome"/>
</dbReference>
<dbReference type="GO" id="GO:0005886">
    <property type="term" value="C:plasma membrane"/>
    <property type="evidence" value="ECO:0007669"/>
    <property type="project" value="UniProtKB-SubCell"/>
</dbReference>
<dbReference type="GO" id="GO:0045259">
    <property type="term" value="C:proton-transporting ATP synthase complex"/>
    <property type="evidence" value="ECO:0007669"/>
    <property type="project" value="UniProtKB-KW"/>
</dbReference>
<dbReference type="GO" id="GO:0033177">
    <property type="term" value="C:proton-transporting two-sector ATPase complex, proton-transporting domain"/>
    <property type="evidence" value="ECO:0007669"/>
    <property type="project" value="InterPro"/>
</dbReference>
<dbReference type="GO" id="GO:0008289">
    <property type="term" value="F:lipid binding"/>
    <property type="evidence" value="ECO:0007669"/>
    <property type="project" value="UniProtKB-KW"/>
</dbReference>
<dbReference type="GO" id="GO:0046933">
    <property type="term" value="F:proton-transporting ATP synthase activity, rotational mechanism"/>
    <property type="evidence" value="ECO:0007669"/>
    <property type="project" value="UniProtKB-UniRule"/>
</dbReference>
<dbReference type="Gene3D" id="1.20.20.10">
    <property type="entry name" value="F1F0 ATP synthase subunit C"/>
    <property type="match status" value="1"/>
</dbReference>
<dbReference type="HAMAP" id="MF_01396">
    <property type="entry name" value="ATP_synth_c_bact"/>
    <property type="match status" value="1"/>
</dbReference>
<dbReference type="InterPro" id="IPR000454">
    <property type="entry name" value="ATP_synth_F0_csu"/>
</dbReference>
<dbReference type="InterPro" id="IPR038662">
    <property type="entry name" value="ATP_synth_F0_csu_sf"/>
</dbReference>
<dbReference type="InterPro" id="IPR002379">
    <property type="entry name" value="ATPase_proteolipid_c-like_dom"/>
</dbReference>
<dbReference type="InterPro" id="IPR035921">
    <property type="entry name" value="F/V-ATP_Csub_sf"/>
</dbReference>
<dbReference type="NCBIfam" id="NF005733">
    <property type="entry name" value="PRK07558.1"/>
    <property type="match status" value="1"/>
</dbReference>
<dbReference type="Pfam" id="PF00137">
    <property type="entry name" value="ATP-synt_C"/>
    <property type="match status" value="1"/>
</dbReference>
<dbReference type="PRINTS" id="PR00124">
    <property type="entry name" value="ATPASEC"/>
</dbReference>
<dbReference type="SUPFAM" id="SSF81333">
    <property type="entry name" value="F1F0 ATP synthase subunit C"/>
    <property type="match status" value="1"/>
</dbReference>
<protein>
    <recommendedName>
        <fullName evidence="1">ATP synthase subunit c</fullName>
    </recommendedName>
    <alternativeName>
        <fullName evidence="1">ATP synthase F(0) sector subunit c</fullName>
    </alternativeName>
    <alternativeName>
        <fullName evidence="1">F-type ATPase subunit c</fullName>
        <shortName evidence="1">F-ATPase subunit c</shortName>
    </alternativeName>
    <alternativeName>
        <fullName evidence="1">Lipid-binding protein</fullName>
    </alternativeName>
</protein>
<proteinExistence type="inferred from homology"/>
<accession>Q1GDE1</accession>
<reference key="1">
    <citation type="submission" date="2006-05" db="EMBL/GenBank/DDBJ databases">
        <title>Complete sequence of chromosome of Silicibacter sp. TM1040.</title>
        <authorList>
            <consortium name="US DOE Joint Genome Institute"/>
            <person name="Copeland A."/>
            <person name="Lucas S."/>
            <person name="Lapidus A."/>
            <person name="Barry K."/>
            <person name="Detter J.C."/>
            <person name="Glavina del Rio T."/>
            <person name="Hammon N."/>
            <person name="Israni S."/>
            <person name="Dalin E."/>
            <person name="Tice H."/>
            <person name="Pitluck S."/>
            <person name="Brettin T."/>
            <person name="Bruce D."/>
            <person name="Han C."/>
            <person name="Tapia R."/>
            <person name="Goodwin L."/>
            <person name="Thompson L.S."/>
            <person name="Gilna P."/>
            <person name="Schmutz J."/>
            <person name="Larimer F."/>
            <person name="Land M."/>
            <person name="Hauser L."/>
            <person name="Kyrpides N."/>
            <person name="Kim E."/>
            <person name="Belas R."/>
            <person name="Moran M.A."/>
            <person name="Buchan A."/>
            <person name="Gonzalez J.M."/>
            <person name="Schell M.A."/>
            <person name="Sun F."/>
            <person name="Richardson P."/>
        </authorList>
    </citation>
    <scope>NUCLEOTIDE SEQUENCE [LARGE SCALE GENOMIC DNA]</scope>
    <source>
        <strain>TM1040</strain>
    </source>
</reference>